<feature type="signal peptide" evidence="1">
    <location>
        <begin position="1"/>
        <end position="21"/>
    </location>
</feature>
<feature type="chain" id="PRO_5000205337" description="Tol-Pal system protein TolB" evidence="1">
    <location>
        <begin position="22"/>
        <end position="441"/>
    </location>
</feature>
<gene>
    <name evidence="1" type="primary">tolB</name>
    <name type="ordered locus">Sama_2086</name>
</gene>
<comment type="function">
    <text evidence="1">Part of the Tol-Pal system, which plays a role in outer membrane invagination during cell division and is important for maintaining outer membrane integrity.</text>
</comment>
<comment type="subunit">
    <text evidence="1">The Tol-Pal system is composed of five core proteins: the inner membrane proteins TolA, TolQ and TolR, the periplasmic protein TolB and the outer membrane protein Pal. They form a network linking the inner and outer membranes and the peptidoglycan layer.</text>
</comment>
<comment type="subcellular location">
    <subcellularLocation>
        <location evidence="1">Periplasm</location>
    </subcellularLocation>
</comment>
<comment type="similarity">
    <text evidence="1">Belongs to the TolB family.</text>
</comment>
<reference key="1">
    <citation type="submission" date="2006-12" db="EMBL/GenBank/DDBJ databases">
        <title>Complete sequence of Shewanella amazonensis SB2B.</title>
        <authorList>
            <consortium name="US DOE Joint Genome Institute"/>
            <person name="Copeland A."/>
            <person name="Lucas S."/>
            <person name="Lapidus A."/>
            <person name="Barry K."/>
            <person name="Detter J.C."/>
            <person name="Glavina del Rio T."/>
            <person name="Hammon N."/>
            <person name="Israni S."/>
            <person name="Dalin E."/>
            <person name="Tice H."/>
            <person name="Pitluck S."/>
            <person name="Munk A.C."/>
            <person name="Brettin T."/>
            <person name="Bruce D."/>
            <person name="Han C."/>
            <person name="Tapia R."/>
            <person name="Gilna P."/>
            <person name="Schmutz J."/>
            <person name="Larimer F."/>
            <person name="Land M."/>
            <person name="Hauser L."/>
            <person name="Kyrpides N."/>
            <person name="Mikhailova N."/>
            <person name="Fredrickson J."/>
            <person name="Richardson P."/>
        </authorList>
    </citation>
    <scope>NUCLEOTIDE SEQUENCE [LARGE SCALE GENOMIC DNA]</scope>
    <source>
        <strain>ATCC BAA-1098 / SB2B</strain>
    </source>
</reference>
<dbReference type="EMBL" id="CP000507">
    <property type="protein sequence ID" value="ABM00292.1"/>
    <property type="molecule type" value="Genomic_DNA"/>
</dbReference>
<dbReference type="RefSeq" id="WP_011760199.1">
    <property type="nucleotide sequence ID" value="NC_008700.1"/>
</dbReference>
<dbReference type="SMR" id="A1S7D5"/>
<dbReference type="STRING" id="326297.Sama_2086"/>
<dbReference type="KEGG" id="saz:Sama_2086"/>
<dbReference type="eggNOG" id="COG0823">
    <property type="taxonomic scope" value="Bacteria"/>
</dbReference>
<dbReference type="HOGENOM" id="CLU_047123_0_0_6"/>
<dbReference type="OrthoDB" id="9802240at2"/>
<dbReference type="Proteomes" id="UP000009175">
    <property type="component" value="Chromosome"/>
</dbReference>
<dbReference type="GO" id="GO:0042597">
    <property type="term" value="C:periplasmic space"/>
    <property type="evidence" value="ECO:0007669"/>
    <property type="project" value="UniProtKB-SubCell"/>
</dbReference>
<dbReference type="GO" id="GO:0051301">
    <property type="term" value="P:cell division"/>
    <property type="evidence" value="ECO:0007669"/>
    <property type="project" value="UniProtKB-UniRule"/>
</dbReference>
<dbReference type="GO" id="GO:0017038">
    <property type="term" value="P:protein import"/>
    <property type="evidence" value="ECO:0007669"/>
    <property type="project" value="InterPro"/>
</dbReference>
<dbReference type="Gene3D" id="2.120.10.30">
    <property type="entry name" value="TolB, C-terminal domain"/>
    <property type="match status" value="1"/>
</dbReference>
<dbReference type="Gene3D" id="3.40.50.10070">
    <property type="entry name" value="TolB, N-terminal domain"/>
    <property type="match status" value="1"/>
</dbReference>
<dbReference type="HAMAP" id="MF_00671">
    <property type="entry name" value="TolB"/>
    <property type="match status" value="1"/>
</dbReference>
<dbReference type="InterPro" id="IPR011042">
    <property type="entry name" value="6-blade_b-propeller_TolB-like"/>
</dbReference>
<dbReference type="InterPro" id="IPR011659">
    <property type="entry name" value="PD40"/>
</dbReference>
<dbReference type="InterPro" id="IPR014167">
    <property type="entry name" value="Tol-Pal_TolB"/>
</dbReference>
<dbReference type="InterPro" id="IPR007195">
    <property type="entry name" value="TolB_N"/>
</dbReference>
<dbReference type="NCBIfam" id="TIGR02800">
    <property type="entry name" value="propeller_TolB"/>
    <property type="match status" value="1"/>
</dbReference>
<dbReference type="PANTHER" id="PTHR36842:SF1">
    <property type="entry name" value="PROTEIN TOLB"/>
    <property type="match status" value="1"/>
</dbReference>
<dbReference type="PANTHER" id="PTHR36842">
    <property type="entry name" value="PROTEIN TOLB HOMOLOG"/>
    <property type="match status" value="1"/>
</dbReference>
<dbReference type="Pfam" id="PF07676">
    <property type="entry name" value="PD40"/>
    <property type="match status" value="4"/>
</dbReference>
<dbReference type="Pfam" id="PF04052">
    <property type="entry name" value="TolB_N"/>
    <property type="match status" value="1"/>
</dbReference>
<dbReference type="SUPFAM" id="SSF52964">
    <property type="entry name" value="TolB, N-terminal domain"/>
    <property type="match status" value="1"/>
</dbReference>
<dbReference type="SUPFAM" id="SSF69304">
    <property type="entry name" value="Tricorn protease N-terminal domain"/>
    <property type="match status" value="1"/>
</dbReference>
<evidence type="ECO:0000255" key="1">
    <source>
        <dbReference type="HAMAP-Rule" id="MF_00671"/>
    </source>
</evidence>
<name>TOLB_SHEAM</name>
<accession>A1S7D5</accession>
<keyword id="KW-0131">Cell cycle</keyword>
<keyword id="KW-0132">Cell division</keyword>
<keyword id="KW-0574">Periplasm</keyword>
<keyword id="KW-1185">Reference proteome</keyword>
<keyword id="KW-0732">Signal</keyword>
<proteinExistence type="inferred from homology"/>
<sequence length="441" mass="48271">MKIIGKWALLIIAALSLPVKAALDIVITEGVDAARPIAVVPFVWQGTGPVPSQISDVVASDLTRSGTFKPLDALGLPQSGISTLAEFAPQKWTGINAEAAVVGAIKPYGPDQYLVTFDLIDLLKAQLAGQAPLNKQDLLLDSRQTVITAAQFRQYGHRISDVVYEKLTGIRGAFLTRIAYVVVNHAEKAPYRLMIADYDGYNEHMLLRSPEPLMSPAWSPDGRRLAYVSFENRKAEIFVQDIFTQARTKVSSFPGINGAPSFSPDGKTLAVTLSKDGQSEIYTIDIATKTTRRITNHYAIDTEPSWFPDGKSLLITSERGGRPQLYKVELDSGKLTRLTFDGEWNLGGSITPDGRTLIFVNRTNGKFNIARMDLETRFMQVLTTTRLDESPSVAPNGTMVIYGTTHQGRQVLAAVSTDGRFKARLPAGQGEVKSPSWSPFL</sequence>
<organism>
    <name type="scientific">Shewanella amazonensis (strain ATCC BAA-1098 / SB2B)</name>
    <dbReference type="NCBI Taxonomy" id="326297"/>
    <lineage>
        <taxon>Bacteria</taxon>
        <taxon>Pseudomonadati</taxon>
        <taxon>Pseudomonadota</taxon>
        <taxon>Gammaproteobacteria</taxon>
        <taxon>Alteromonadales</taxon>
        <taxon>Shewanellaceae</taxon>
        <taxon>Shewanella</taxon>
    </lineage>
</organism>
<protein>
    <recommendedName>
        <fullName evidence="1">Tol-Pal system protein TolB</fullName>
    </recommendedName>
</protein>